<comment type="function">
    <text>The M ring may be actively involved in energy transduction.</text>
</comment>
<comment type="subunit">
    <text>The basal body constitutes a major portion of the flagellar organelle and consists of two rings, one in the peptidoglycan layer and one in the plasma membrane.</text>
</comment>
<comment type="subcellular location">
    <subcellularLocation>
        <location evidence="1">Cell membrane</location>
        <topology evidence="1">Multi-pass membrane protein</topology>
    </subcellularLocation>
    <subcellularLocation>
        <location evidence="1">Bacterial flagellum basal body</location>
    </subcellularLocation>
</comment>
<comment type="similarity">
    <text evidence="4">Belongs to the FliF family.</text>
</comment>
<evidence type="ECO:0000250" key="1"/>
<evidence type="ECO:0000255" key="2"/>
<evidence type="ECO:0000256" key="3">
    <source>
        <dbReference type="SAM" id="MobiDB-lite"/>
    </source>
</evidence>
<evidence type="ECO:0000305" key="4"/>
<sequence>MNRTLMQMKNKTSEFWKNRSKLQKILMVSALAAIIIIGIIISVFASNSKMAPLYKDLSAEEAGQIKEELDAKKVPNELSNGGTVISVPEDQVDSLKVQMAAEGLPKTGSIDYSFFGQNAGFGLTDNEFDMVKVKATQTELSNLINEMDGIKNSKVMINLPKDAVFVGEEQSAASASIVLQIQPGYTLDQSQINGLYHLVSKSVPNLKEDNIVIMDQNSTYYDKSDSDAGSYADSYSSQQGIKSQVEKDIQKHVQSLLGTMMGQDKVVVSVTADIDFTKENRTEDIVEPVDKENMEGIAVSAEKVSETYQGDGAANGGTAGTGEEDVTNYKADGENTESGNYEKNSNKINYEVNRIHKEIAESPYKVRDLGIQVMVEPPDAKNTASLSTERQDDIQKILSTVVRTSLDKDETQNQNLSDADINNKIVVSVQPFDGKVNLDTNTEESSGIPLWAYIVGGVLIAAIIVLIIMLIRKKRAQEDEFEEYEYEVPQEPINLPDINEEENETAESVRRKQLEKMAKDKPEDFAKLLRSWLAED</sequence>
<dbReference type="EMBL" id="M54965">
    <property type="status" value="NOT_ANNOTATED_CDS"/>
    <property type="molecule type" value="Genomic_DNA"/>
</dbReference>
<dbReference type="EMBL" id="AL009126">
    <property type="protein sequence ID" value="CAB13494.1"/>
    <property type="molecule type" value="Genomic_DNA"/>
</dbReference>
<dbReference type="EMBL" id="X56049">
    <property type="protein sequence ID" value="CAA39520.1"/>
    <property type="molecule type" value="Genomic_DNA"/>
</dbReference>
<dbReference type="PIR" id="JG0022">
    <property type="entry name" value="JG0022"/>
</dbReference>
<dbReference type="RefSeq" id="NP_389503.1">
    <property type="nucleotide sequence ID" value="NC_000964.3"/>
</dbReference>
<dbReference type="RefSeq" id="WP_010886506.1">
    <property type="nucleotide sequence ID" value="NZ_OZ025638.1"/>
</dbReference>
<dbReference type="SMR" id="P23447"/>
<dbReference type="FunCoup" id="P23447">
    <property type="interactions" value="118"/>
</dbReference>
<dbReference type="IntAct" id="P23447">
    <property type="interactions" value="1"/>
</dbReference>
<dbReference type="STRING" id="224308.BSU16210"/>
<dbReference type="jPOST" id="P23447"/>
<dbReference type="PaxDb" id="224308-BSU16210"/>
<dbReference type="EnsemblBacteria" id="CAB13494">
    <property type="protein sequence ID" value="CAB13494"/>
    <property type="gene ID" value="BSU_16210"/>
</dbReference>
<dbReference type="GeneID" id="936677"/>
<dbReference type="KEGG" id="bsu:BSU16210"/>
<dbReference type="PATRIC" id="fig|224308.43.peg.1715"/>
<dbReference type="eggNOG" id="COG1766">
    <property type="taxonomic scope" value="Bacteria"/>
</dbReference>
<dbReference type="InParanoid" id="P23447"/>
<dbReference type="OrthoDB" id="9807026at2"/>
<dbReference type="PhylomeDB" id="P23447"/>
<dbReference type="BioCyc" id="BSUB:BSU16210-MONOMER"/>
<dbReference type="Proteomes" id="UP000001570">
    <property type="component" value="Chromosome"/>
</dbReference>
<dbReference type="GO" id="GO:0009431">
    <property type="term" value="C:bacterial-type flagellum basal body, MS ring"/>
    <property type="evidence" value="ECO:0007669"/>
    <property type="project" value="InterPro"/>
</dbReference>
<dbReference type="GO" id="GO:0005886">
    <property type="term" value="C:plasma membrane"/>
    <property type="evidence" value="ECO:0007669"/>
    <property type="project" value="UniProtKB-SubCell"/>
</dbReference>
<dbReference type="GO" id="GO:0003774">
    <property type="term" value="F:cytoskeletal motor activity"/>
    <property type="evidence" value="ECO:0007669"/>
    <property type="project" value="InterPro"/>
</dbReference>
<dbReference type="GO" id="GO:0044780">
    <property type="term" value="P:bacterial-type flagellum assembly"/>
    <property type="evidence" value="ECO:0000315"/>
    <property type="project" value="CACAO"/>
</dbReference>
<dbReference type="GO" id="GO:0071978">
    <property type="term" value="P:bacterial-type flagellum-dependent swarming motility"/>
    <property type="evidence" value="ECO:0000315"/>
    <property type="project" value="CACAO"/>
</dbReference>
<dbReference type="Gene3D" id="3.30.300.30">
    <property type="match status" value="1"/>
</dbReference>
<dbReference type="InterPro" id="IPR045851">
    <property type="entry name" value="AMP-bd_C_sf"/>
</dbReference>
<dbReference type="InterPro" id="IPR013556">
    <property type="entry name" value="Flag_M-ring_C"/>
</dbReference>
<dbReference type="InterPro" id="IPR000067">
    <property type="entry name" value="FlgMring_FliF"/>
</dbReference>
<dbReference type="InterPro" id="IPR006182">
    <property type="entry name" value="FliF_N_dom"/>
</dbReference>
<dbReference type="InterPro" id="IPR043427">
    <property type="entry name" value="YscJ/FliF"/>
</dbReference>
<dbReference type="NCBIfam" id="TIGR00206">
    <property type="entry name" value="fliF"/>
    <property type="match status" value="1"/>
</dbReference>
<dbReference type="PANTHER" id="PTHR30046">
    <property type="entry name" value="FLAGELLAR M-RING PROTEIN"/>
    <property type="match status" value="1"/>
</dbReference>
<dbReference type="PANTHER" id="PTHR30046:SF0">
    <property type="entry name" value="FLAGELLAR M-RING PROTEIN"/>
    <property type="match status" value="1"/>
</dbReference>
<dbReference type="Pfam" id="PF01514">
    <property type="entry name" value="YscJ_FliF"/>
    <property type="match status" value="1"/>
</dbReference>
<dbReference type="Pfam" id="PF08345">
    <property type="entry name" value="YscJ_FliF_C"/>
    <property type="match status" value="1"/>
</dbReference>
<dbReference type="PIRSF" id="PIRSF004862">
    <property type="entry name" value="FliF"/>
    <property type="match status" value="1"/>
</dbReference>
<dbReference type="PRINTS" id="PR01009">
    <property type="entry name" value="FLGMRINGFLIF"/>
</dbReference>
<organism>
    <name type="scientific">Bacillus subtilis (strain 168)</name>
    <dbReference type="NCBI Taxonomy" id="224308"/>
    <lineage>
        <taxon>Bacteria</taxon>
        <taxon>Bacillati</taxon>
        <taxon>Bacillota</taxon>
        <taxon>Bacilli</taxon>
        <taxon>Bacillales</taxon>
        <taxon>Bacillaceae</taxon>
        <taxon>Bacillus</taxon>
    </lineage>
</organism>
<protein>
    <recommendedName>
        <fullName>Flagellar M-ring protein</fullName>
    </recommendedName>
</protein>
<reference key="1">
    <citation type="journal article" date="1991" name="Gene">
        <title>Gene-protein relationships in the flagellar hook-basal body complex of Bacillus subtilis: sequences of the flgB, flgC, flgG, fliE and fliF genes.</title>
        <authorList>
            <person name="Zuberi A.R."/>
            <person name="Ying C."/>
            <person name="Bischoff D.S."/>
            <person name="Ordal G.W."/>
        </authorList>
    </citation>
    <scope>NUCLEOTIDE SEQUENCE [GENOMIC DNA]</scope>
</reference>
<reference key="2">
    <citation type="journal article" date="1997" name="Nature">
        <title>The complete genome sequence of the Gram-positive bacterium Bacillus subtilis.</title>
        <authorList>
            <person name="Kunst F."/>
            <person name="Ogasawara N."/>
            <person name="Moszer I."/>
            <person name="Albertini A.M."/>
            <person name="Alloni G."/>
            <person name="Azevedo V."/>
            <person name="Bertero M.G."/>
            <person name="Bessieres P."/>
            <person name="Bolotin A."/>
            <person name="Borchert S."/>
            <person name="Borriss R."/>
            <person name="Boursier L."/>
            <person name="Brans A."/>
            <person name="Braun M."/>
            <person name="Brignell S.C."/>
            <person name="Bron S."/>
            <person name="Brouillet S."/>
            <person name="Bruschi C.V."/>
            <person name="Caldwell B."/>
            <person name="Capuano V."/>
            <person name="Carter N.M."/>
            <person name="Choi S.-K."/>
            <person name="Codani J.-J."/>
            <person name="Connerton I.F."/>
            <person name="Cummings N.J."/>
            <person name="Daniel R.A."/>
            <person name="Denizot F."/>
            <person name="Devine K.M."/>
            <person name="Duesterhoeft A."/>
            <person name="Ehrlich S.D."/>
            <person name="Emmerson P.T."/>
            <person name="Entian K.-D."/>
            <person name="Errington J."/>
            <person name="Fabret C."/>
            <person name="Ferrari E."/>
            <person name="Foulger D."/>
            <person name="Fritz C."/>
            <person name="Fujita M."/>
            <person name="Fujita Y."/>
            <person name="Fuma S."/>
            <person name="Galizzi A."/>
            <person name="Galleron N."/>
            <person name="Ghim S.-Y."/>
            <person name="Glaser P."/>
            <person name="Goffeau A."/>
            <person name="Golightly E.J."/>
            <person name="Grandi G."/>
            <person name="Guiseppi G."/>
            <person name="Guy B.J."/>
            <person name="Haga K."/>
            <person name="Haiech J."/>
            <person name="Harwood C.R."/>
            <person name="Henaut A."/>
            <person name="Hilbert H."/>
            <person name="Holsappel S."/>
            <person name="Hosono S."/>
            <person name="Hullo M.-F."/>
            <person name="Itaya M."/>
            <person name="Jones L.-M."/>
            <person name="Joris B."/>
            <person name="Karamata D."/>
            <person name="Kasahara Y."/>
            <person name="Klaerr-Blanchard M."/>
            <person name="Klein C."/>
            <person name="Kobayashi Y."/>
            <person name="Koetter P."/>
            <person name="Koningstein G."/>
            <person name="Krogh S."/>
            <person name="Kumano M."/>
            <person name="Kurita K."/>
            <person name="Lapidus A."/>
            <person name="Lardinois S."/>
            <person name="Lauber J."/>
            <person name="Lazarevic V."/>
            <person name="Lee S.-M."/>
            <person name="Levine A."/>
            <person name="Liu H."/>
            <person name="Masuda S."/>
            <person name="Mauel C."/>
            <person name="Medigue C."/>
            <person name="Medina N."/>
            <person name="Mellado R.P."/>
            <person name="Mizuno M."/>
            <person name="Moestl D."/>
            <person name="Nakai S."/>
            <person name="Noback M."/>
            <person name="Noone D."/>
            <person name="O'Reilly M."/>
            <person name="Ogawa K."/>
            <person name="Ogiwara A."/>
            <person name="Oudega B."/>
            <person name="Park S.-H."/>
            <person name="Parro V."/>
            <person name="Pohl T.M."/>
            <person name="Portetelle D."/>
            <person name="Porwollik S."/>
            <person name="Prescott A.M."/>
            <person name="Presecan E."/>
            <person name="Pujic P."/>
            <person name="Purnelle B."/>
            <person name="Rapoport G."/>
            <person name="Rey M."/>
            <person name="Reynolds S."/>
            <person name="Rieger M."/>
            <person name="Rivolta C."/>
            <person name="Rocha E."/>
            <person name="Roche B."/>
            <person name="Rose M."/>
            <person name="Sadaie Y."/>
            <person name="Sato T."/>
            <person name="Scanlan E."/>
            <person name="Schleich S."/>
            <person name="Schroeter R."/>
            <person name="Scoffone F."/>
            <person name="Sekiguchi J."/>
            <person name="Sekowska A."/>
            <person name="Seror S.J."/>
            <person name="Serror P."/>
            <person name="Shin B.-S."/>
            <person name="Soldo B."/>
            <person name="Sorokin A."/>
            <person name="Tacconi E."/>
            <person name="Takagi T."/>
            <person name="Takahashi H."/>
            <person name="Takemaru K."/>
            <person name="Takeuchi M."/>
            <person name="Tamakoshi A."/>
            <person name="Tanaka T."/>
            <person name="Terpstra P."/>
            <person name="Tognoni A."/>
            <person name="Tosato V."/>
            <person name="Uchiyama S."/>
            <person name="Vandenbol M."/>
            <person name="Vannier F."/>
            <person name="Vassarotti A."/>
            <person name="Viari A."/>
            <person name="Wambutt R."/>
            <person name="Wedler E."/>
            <person name="Wedler H."/>
            <person name="Weitzenegger T."/>
            <person name="Winters P."/>
            <person name="Wipat A."/>
            <person name="Yamamoto H."/>
            <person name="Yamane K."/>
            <person name="Yasumoto K."/>
            <person name="Yata K."/>
            <person name="Yoshida K."/>
            <person name="Yoshikawa H.-F."/>
            <person name="Zumstein E."/>
            <person name="Yoshikawa H."/>
            <person name="Danchin A."/>
        </authorList>
    </citation>
    <scope>NUCLEOTIDE SEQUENCE [LARGE SCALE GENOMIC DNA]</scope>
    <source>
        <strain>168</strain>
    </source>
</reference>
<reference key="3">
    <citation type="journal article" date="1991" name="J. Bacteriol.">
        <title>The flaA locus of Bacillus subtilis is part of a large operon coding for flagellar structures, motility functions, and an ATPase-like polypeptide.</title>
        <authorList>
            <person name="Albertini A.M."/>
            <person name="Caramori T."/>
            <person name="Crabb W.D."/>
            <person name="Scoffone F."/>
            <person name="Galizzi A."/>
        </authorList>
    </citation>
    <scope>NUCLEOTIDE SEQUENCE [GENOMIC DNA] OF 355-536</scope>
    <source>
        <strain>168</strain>
    </source>
</reference>
<accession>P23447</accession>
<gene>
    <name type="primary">fliF</name>
    <name type="ordered locus">BSU16210</name>
</gene>
<proteinExistence type="inferred from homology"/>
<keyword id="KW-0975">Bacterial flagellum</keyword>
<keyword id="KW-1003">Cell membrane</keyword>
<keyword id="KW-0472">Membrane</keyword>
<keyword id="KW-1185">Reference proteome</keyword>
<keyword id="KW-0812">Transmembrane</keyword>
<keyword id="KW-1133">Transmembrane helix</keyword>
<feature type="chain" id="PRO_0000180873" description="Flagellar M-ring protein">
    <location>
        <begin position="1"/>
        <end position="536"/>
    </location>
</feature>
<feature type="transmembrane region" description="Helical" evidence="2">
    <location>
        <begin position="25"/>
        <end position="45"/>
    </location>
</feature>
<feature type="transmembrane region" description="Helical" evidence="2">
    <location>
        <begin position="451"/>
        <end position="471"/>
    </location>
</feature>
<feature type="region of interest" description="Disordered" evidence="3">
    <location>
        <begin position="308"/>
        <end position="342"/>
    </location>
</feature>
<name>FLIF_BACSU</name>